<proteinExistence type="inferred from homology"/>
<keyword id="KW-0004">4Fe-4S</keyword>
<keyword id="KW-0067">ATP-binding</keyword>
<keyword id="KW-0963">Cytoplasm</keyword>
<keyword id="KW-0408">Iron</keyword>
<keyword id="KW-0411">Iron-sulfur</keyword>
<keyword id="KW-0460">Magnesium</keyword>
<keyword id="KW-0479">Metal-binding</keyword>
<keyword id="KW-0547">Nucleotide-binding</keyword>
<keyword id="KW-1185">Reference proteome</keyword>
<keyword id="KW-0694">RNA-binding</keyword>
<keyword id="KW-0808">Transferase</keyword>
<keyword id="KW-0819">tRNA processing</keyword>
<keyword id="KW-0820">tRNA-binding</keyword>
<organism>
    <name type="scientific">Cytophaga hutchinsonii (strain ATCC 33406 / DSM 1761 / CIP 103989 / NBRC 15051 / NCIMB 9469 / D465)</name>
    <dbReference type="NCBI Taxonomy" id="269798"/>
    <lineage>
        <taxon>Bacteria</taxon>
        <taxon>Pseudomonadati</taxon>
        <taxon>Bacteroidota</taxon>
        <taxon>Cytophagia</taxon>
        <taxon>Cytophagales</taxon>
        <taxon>Cytophagaceae</taxon>
        <taxon>Cytophaga</taxon>
    </lineage>
</organism>
<dbReference type="EC" id="2.8.1.-" evidence="1"/>
<dbReference type="EMBL" id="CP000383">
    <property type="protein sequence ID" value="ABG59102.1"/>
    <property type="molecule type" value="Genomic_DNA"/>
</dbReference>
<dbReference type="SMR" id="Q11U13"/>
<dbReference type="STRING" id="269798.CHU_1835"/>
<dbReference type="KEGG" id="chu:CHU_1835"/>
<dbReference type="eggNOG" id="COG0037">
    <property type="taxonomic scope" value="Bacteria"/>
</dbReference>
<dbReference type="HOGENOM" id="CLU_026481_0_0_10"/>
<dbReference type="Proteomes" id="UP000001822">
    <property type="component" value="Chromosome"/>
</dbReference>
<dbReference type="GO" id="GO:0005737">
    <property type="term" value="C:cytoplasm"/>
    <property type="evidence" value="ECO:0007669"/>
    <property type="project" value="UniProtKB-SubCell"/>
</dbReference>
<dbReference type="GO" id="GO:0051539">
    <property type="term" value="F:4 iron, 4 sulfur cluster binding"/>
    <property type="evidence" value="ECO:0007669"/>
    <property type="project" value="UniProtKB-UniRule"/>
</dbReference>
<dbReference type="GO" id="GO:0005524">
    <property type="term" value="F:ATP binding"/>
    <property type="evidence" value="ECO:0007669"/>
    <property type="project" value="UniProtKB-UniRule"/>
</dbReference>
<dbReference type="GO" id="GO:0000287">
    <property type="term" value="F:magnesium ion binding"/>
    <property type="evidence" value="ECO:0007669"/>
    <property type="project" value="UniProtKB-UniRule"/>
</dbReference>
<dbReference type="GO" id="GO:0016783">
    <property type="term" value="F:sulfurtransferase activity"/>
    <property type="evidence" value="ECO:0007669"/>
    <property type="project" value="UniProtKB-UniRule"/>
</dbReference>
<dbReference type="GO" id="GO:0000049">
    <property type="term" value="F:tRNA binding"/>
    <property type="evidence" value="ECO:0007669"/>
    <property type="project" value="UniProtKB-KW"/>
</dbReference>
<dbReference type="GO" id="GO:0034227">
    <property type="term" value="P:tRNA thio-modification"/>
    <property type="evidence" value="ECO:0007669"/>
    <property type="project" value="UniProtKB-UniRule"/>
</dbReference>
<dbReference type="CDD" id="cd24138">
    <property type="entry name" value="TtcA-like"/>
    <property type="match status" value="1"/>
</dbReference>
<dbReference type="Gene3D" id="3.40.50.620">
    <property type="entry name" value="HUPs"/>
    <property type="match status" value="1"/>
</dbReference>
<dbReference type="HAMAP" id="MF_01850">
    <property type="entry name" value="TtcA"/>
    <property type="match status" value="1"/>
</dbReference>
<dbReference type="InterPro" id="IPR014729">
    <property type="entry name" value="Rossmann-like_a/b/a_fold"/>
</dbReference>
<dbReference type="InterPro" id="IPR011063">
    <property type="entry name" value="TilS/TtcA_N"/>
</dbReference>
<dbReference type="InterPro" id="IPR012089">
    <property type="entry name" value="tRNA_Cyd_32_2_STrfase"/>
</dbReference>
<dbReference type="InterPro" id="IPR035107">
    <property type="entry name" value="tRNA_thiolation_TtcA_Ctu1"/>
</dbReference>
<dbReference type="NCBIfam" id="NF007972">
    <property type="entry name" value="PRK10696.1"/>
    <property type="match status" value="1"/>
</dbReference>
<dbReference type="PANTHER" id="PTHR43686:SF1">
    <property type="entry name" value="AMINOTRAN_5 DOMAIN-CONTAINING PROTEIN"/>
    <property type="match status" value="1"/>
</dbReference>
<dbReference type="PANTHER" id="PTHR43686">
    <property type="entry name" value="SULFURTRANSFERASE-RELATED"/>
    <property type="match status" value="1"/>
</dbReference>
<dbReference type="Pfam" id="PF01171">
    <property type="entry name" value="ATP_bind_3"/>
    <property type="match status" value="1"/>
</dbReference>
<dbReference type="PIRSF" id="PIRSF004976">
    <property type="entry name" value="ATPase_YdaO"/>
    <property type="match status" value="1"/>
</dbReference>
<dbReference type="SUPFAM" id="SSF52402">
    <property type="entry name" value="Adenine nucleotide alpha hydrolases-like"/>
    <property type="match status" value="1"/>
</dbReference>
<name>TTCA_CYTH3</name>
<feature type="chain" id="PRO_0000348707" description="tRNA-cytidine(32) 2-sulfurtransferase">
    <location>
        <begin position="1"/>
        <end position="285"/>
    </location>
</feature>
<feature type="short sequence motif" description="PP-loop motif" evidence="1">
    <location>
        <begin position="48"/>
        <end position="53"/>
    </location>
</feature>
<feature type="binding site" evidence="1">
    <location>
        <position position="122"/>
    </location>
    <ligand>
        <name>[4Fe-4S] cluster</name>
        <dbReference type="ChEBI" id="CHEBI:49883"/>
    </ligand>
</feature>
<feature type="binding site" evidence="1">
    <location>
        <position position="125"/>
    </location>
    <ligand>
        <name>[4Fe-4S] cluster</name>
        <dbReference type="ChEBI" id="CHEBI:49883"/>
    </ligand>
</feature>
<feature type="binding site" evidence="1">
    <location>
        <position position="213"/>
    </location>
    <ligand>
        <name>[4Fe-4S] cluster</name>
        <dbReference type="ChEBI" id="CHEBI:49883"/>
    </ligand>
</feature>
<accession>Q11U13</accession>
<gene>
    <name evidence="1" type="primary">ttcA</name>
    <name type="ordered locus">CHU_1835</name>
</gene>
<evidence type="ECO:0000255" key="1">
    <source>
        <dbReference type="HAMAP-Rule" id="MF_01850"/>
    </source>
</evidence>
<comment type="function">
    <text evidence="1">Catalyzes the ATP-dependent 2-thiolation of cytidine in position 32 of tRNA, to form 2-thiocytidine (s(2)C32). The sulfur atoms are provided by the cysteine/cysteine desulfurase (IscS) system.</text>
</comment>
<comment type="catalytic activity">
    <reaction evidence="1">
        <text>cytidine(32) in tRNA + S-sulfanyl-L-cysteinyl-[cysteine desulfurase] + AH2 + ATP = 2-thiocytidine(32) in tRNA + L-cysteinyl-[cysteine desulfurase] + A + AMP + diphosphate + H(+)</text>
        <dbReference type="Rhea" id="RHEA:57048"/>
        <dbReference type="Rhea" id="RHEA-COMP:10288"/>
        <dbReference type="Rhea" id="RHEA-COMP:12157"/>
        <dbReference type="Rhea" id="RHEA-COMP:12158"/>
        <dbReference type="Rhea" id="RHEA-COMP:14821"/>
        <dbReference type="ChEBI" id="CHEBI:13193"/>
        <dbReference type="ChEBI" id="CHEBI:15378"/>
        <dbReference type="ChEBI" id="CHEBI:17499"/>
        <dbReference type="ChEBI" id="CHEBI:29950"/>
        <dbReference type="ChEBI" id="CHEBI:30616"/>
        <dbReference type="ChEBI" id="CHEBI:33019"/>
        <dbReference type="ChEBI" id="CHEBI:61963"/>
        <dbReference type="ChEBI" id="CHEBI:82748"/>
        <dbReference type="ChEBI" id="CHEBI:141453"/>
        <dbReference type="ChEBI" id="CHEBI:456215"/>
    </reaction>
    <physiologicalReaction direction="left-to-right" evidence="1">
        <dbReference type="Rhea" id="RHEA:57049"/>
    </physiologicalReaction>
</comment>
<comment type="cofactor">
    <cofactor evidence="1">
        <name>Mg(2+)</name>
        <dbReference type="ChEBI" id="CHEBI:18420"/>
    </cofactor>
</comment>
<comment type="cofactor">
    <cofactor evidence="1">
        <name>[4Fe-4S] cluster</name>
        <dbReference type="ChEBI" id="CHEBI:49883"/>
    </cofactor>
    <text evidence="1">Binds 1 [4Fe-4S] cluster per subunit. The cluster is chelated by three Cys residues, the fourth Fe has a free coordination site that may bind a sulfur atom transferred from the persulfide of IscS.</text>
</comment>
<comment type="pathway">
    <text evidence="1">tRNA modification.</text>
</comment>
<comment type="subunit">
    <text evidence="1">Homodimer.</text>
</comment>
<comment type="subcellular location">
    <subcellularLocation>
        <location evidence="1">Cytoplasm</location>
    </subcellularLocation>
</comment>
<comment type="miscellaneous">
    <text evidence="1">The thiolation reaction likely consists of two steps: a first activation step by ATP to form an adenylated intermediate of the target base of tRNA, and a second nucleophilic substitution step of the sulfur (S) atom supplied by the hydrosulfide attached to the Fe-S cluster.</text>
</comment>
<comment type="similarity">
    <text evidence="1">Belongs to the TtcA family.</text>
</comment>
<sequence length="285" mass="33320">MRHTFTTEIMPLPTPEEKNINRLRKSFWEAVEEFDLIEPGDKIMVCLSGGKDSYTMLDMFIHAQTVRKNFEIIAVNLDQKQPDYPEHILPEYLTHLGVNFKIVEKDTYSIVIDKTPAGKTMCSLCSRLRRGSLYATAEELGVTKIALGHHREDVLETFFLNLFFSGKMEAMPAKYRTDDGKHVVIRPLVYCKENEIAEYSIYKKFPIIPCNLCGSQENMQRKITKKMLADWELQYPNRKEVIYNALKNISPSHLFDRDLYDFKELKHRVEELNEKDTPKVEEYIP</sequence>
<reference key="1">
    <citation type="journal article" date="2007" name="Appl. Environ. Microbiol.">
        <title>Genome sequence of the cellulolytic gliding bacterium Cytophaga hutchinsonii.</title>
        <authorList>
            <person name="Xie G."/>
            <person name="Bruce D.C."/>
            <person name="Challacombe J.F."/>
            <person name="Chertkov O."/>
            <person name="Detter J.C."/>
            <person name="Gilna P."/>
            <person name="Han C.S."/>
            <person name="Lucas S."/>
            <person name="Misra M."/>
            <person name="Myers G.L."/>
            <person name="Richardson P."/>
            <person name="Tapia R."/>
            <person name="Thayer N."/>
            <person name="Thompson L.S."/>
            <person name="Brettin T.S."/>
            <person name="Henrissat B."/>
            <person name="Wilson D.B."/>
            <person name="McBride M.J."/>
        </authorList>
    </citation>
    <scope>NUCLEOTIDE SEQUENCE [LARGE SCALE GENOMIC DNA]</scope>
    <source>
        <strain>ATCC 33406 / DSM 1761 / JCM 20678 / CIP 103989 / IAM 12607 / NBRC 15051 / NCIMB 9469 / D465</strain>
    </source>
</reference>
<protein>
    <recommendedName>
        <fullName evidence="1">tRNA-cytidine(32) 2-sulfurtransferase</fullName>
        <ecNumber evidence="1">2.8.1.-</ecNumber>
    </recommendedName>
    <alternativeName>
        <fullName evidence="1">Two-thiocytidine biosynthesis protein A</fullName>
    </alternativeName>
    <alternativeName>
        <fullName evidence="1">tRNA 2-thiocytidine biosynthesis protein TtcA</fullName>
    </alternativeName>
</protein>